<gene>
    <name type="ordered locus">Oant_1614</name>
</gene>
<protein>
    <recommendedName>
        <fullName evidence="1">UPF0386 protein Oant_1614</fullName>
    </recommendedName>
</protein>
<accession>A6WZC6</accession>
<keyword id="KW-1185">Reference proteome</keyword>
<reference key="1">
    <citation type="journal article" date="2011" name="J. Bacteriol.">
        <title>Genome of Ochrobactrum anthropi ATCC 49188 T, a versatile opportunistic pathogen and symbiont of several eukaryotic hosts.</title>
        <authorList>
            <person name="Chain P.S."/>
            <person name="Lang D.M."/>
            <person name="Comerci D.J."/>
            <person name="Malfatti S.A."/>
            <person name="Vergez L.M."/>
            <person name="Shin M."/>
            <person name="Ugalde R.A."/>
            <person name="Garcia E."/>
            <person name="Tolmasky M.E."/>
        </authorList>
    </citation>
    <scope>NUCLEOTIDE SEQUENCE [LARGE SCALE GENOMIC DNA]</scope>
    <source>
        <strain>ATCC 49188 / DSM 6882 / CCUG 24695 / JCM 21032 / LMG 3331 / NBRC 15819 / NCTC 12168 / Alc 37</strain>
    </source>
</reference>
<comment type="similarity">
    <text evidence="1">Belongs to the UPF0386 family.</text>
</comment>
<comment type="sequence caution" evidence="2">
    <conflict type="erroneous initiation">
        <sequence resource="EMBL-CDS" id="ABS14330"/>
    </conflict>
</comment>
<feature type="chain" id="PRO_0000352171" description="UPF0386 protein Oant_1614">
    <location>
        <begin position="1"/>
        <end position="84"/>
    </location>
</feature>
<dbReference type="EMBL" id="CP000758">
    <property type="protein sequence ID" value="ABS14330.1"/>
    <property type="status" value="ALT_INIT"/>
    <property type="molecule type" value="Genomic_DNA"/>
</dbReference>
<dbReference type="RefSeq" id="WP_040130087.1">
    <property type="nucleotide sequence ID" value="NC_009667.1"/>
</dbReference>
<dbReference type="STRING" id="439375.Oant_1614"/>
<dbReference type="KEGG" id="oan:Oant_1614"/>
<dbReference type="PATRIC" id="fig|439375.7.peg.1701"/>
<dbReference type="eggNOG" id="COG3811">
    <property type="taxonomic scope" value="Bacteria"/>
</dbReference>
<dbReference type="HOGENOM" id="CLU_164736_0_0_5"/>
<dbReference type="Proteomes" id="UP000002301">
    <property type="component" value="Chromosome 1"/>
</dbReference>
<dbReference type="HAMAP" id="MF_00827">
    <property type="entry name" value="UPF0386"/>
    <property type="match status" value="1"/>
</dbReference>
<dbReference type="InterPro" id="IPR018654">
    <property type="entry name" value="YjhX_toxin"/>
</dbReference>
<dbReference type="NCBIfam" id="NF010240">
    <property type="entry name" value="PRK13687.1"/>
    <property type="match status" value="1"/>
</dbReference>
<dbReference type="Pfam" id="PF09857">
    <property type="entry name" value="YjhX_toxin"/>
    <property type="match status" value="1"/>
</dbReference>
<name>Y1614_BRUA4</name>
<sequence>MNISRMEQRVLHVLAQGGYIRHQREDGHICEIECFTREGYLLSDCTMAVFQQLRRKRLIESRMGSPYRISFKGRENVRAQLNNR</sequence>
<proteinExistence type="inferred from homology"/>
<organism>
    <name type="scientific">Brucella anthropi (strain ATCC 49188 / DSM 6882 / CCUG 24695 / JCM 21032 / LMG 3331 / NBRC 15819 / NCTC 12168 / Alc 37)</name>
    <name type="common">Ochrobactrum anthropi</name>
    <dbReference type="NCBI Taxonomy" id="439375"/>
    <lineage>
        <taxon>Bacteria</taxon>
        <taxon>Pseudomonadati</taxon>
        <taxon>Pseudomonadota</taxon>
        <taxon>Alphaproteobacteria</taxon>
        <taxon>Hyphomicrobiales</taxon>
        <taxon>Brucellaceae</taxon>
        <taxon>Brucella/Ochrobactrum group</taxon>
        <taxon>Brucella</taxon>
    </lineage>
</organism>
<evidence type="ECO:0000255" key="1">
    <source>
        <dbReference type="HAMAP-Rule" id="MF_00827"/>
    </source>
</evidence>
<evidence type="ECO:0000305" key="2"/>